<gene>
    <name type="primary">OCT1</name>
    <name type="ORF">SNOG_15771</name>
</gene>
<keyword id="KW-0378">Hydrolase</keyword>
<keyword id="KW-0479">Metal-binding</keyword>
<keyword id="KW-0482">Metalloprotease</keyword>
<keyword id="KW-0496">Mitochondrion</keyword>
<keyword id="KW-0645">Protease</keyword>
<keyword id="KW-0809">Transit peptide</keyword>
<keyword id="KW-0862">Zinc</keyword>
<sequence length="790" mass="89067">MLKRLARNNSSPWICSRCLQQSQRQRRFNSTFAATATARDHAPSALYGLSASGKTDDDALRKVFDNASFWESFKRGTSNKKPSGIIGNKYLTHPDGFIDFVTVTIQRCNGVVEKVSRAETIEDFKYMVKDLDKLSDLLCRVIDLADFVRSTHPNRQFQIMAVKAYHTVFQYMNQLNTTPVLYDQLKKASDIPEVFESWTEEERIVARILMEDFARFGIGLDDATRQKLVDLSGEIAEVGSQFVEGMSPETPTLKFESKRLKGLDPNLAKALTKWGETRISTMHHEAQAVLRFVDDAEVRRETYSAVRTAGSSTIARLEKMLKLRAELAQLSGYETFSHMTLENKMAKTPEAVNTFLKALYEDSRPSVLADLHELMELKRGDAHQDNFPNRMNAWDKFYYTQKMLSTMEGAYKQRTADSLSAYFSVGTVLQGISRLFDRLYGVRLVPQETQPGEVWEDGVRRLDVISDTEGHIAVLYCDLFSRPGKTPNPAHFTLRCSREILPAELEEMQHMPHRFSSPIEAATDGMSVSYNASRNSYFQLPTIALICDFSKPSSPRPTLLNIHDVRTLFHEMGHALHSILGRTALQNVSGTRCATDIAELPSVLMEHFAFDPSVLALYARHWDTNAPLPLALLENRLAIDNRNGYSELESQILLAMLDQAYHSNLPLDPAFNSTSVYHNTYTRFASVPEPAGTRWQGFFGHLFGYGATYYSYLFDRAIASRIWKGVFNEGRDGGSLDREKGELYKNEVLRWGGGRDGWVCLAGVLRDGKVGEGGEGAMREVGKWGIDAGK</sequence>
<comment type="function">
    <text evidence="1">Cleaves proteins, imported into the mitochondrion, to their mature size. While most mitochondrial precursor proteins are processed to the mature form in one step by mitochondrial processing peptidase (MPP), the sequential cleavage by MIP of an octapeptide after initial processing by MPP is a required step for a subgroup of nuclear-encoded precursor proteins destined for the matrix or the inner membrane (By similarity).</text>
</comment>
<comment type="catalytic activity">
    <reaction>
        <text>Release of an N-terminal octapeptide as second stage of processing of some proteins imported into the mitochondrion.</text>
        <dbReference type="EC" id="3.4.24.59"/>
    </reaction>
</comment>
<comment type="cofactor">
    <cofactor evidence="1">
        <name>Zn(2+)</name>
        <dbReference type="ChEBI" id="CHEBI:29105"/>
    </cofactor>
    <text evidence="1">Binds 1 zinc ion.</text>
</comment>
<comment type="subcellular location">
    <subcellularLocation>
        <location evidence="1">Mitochondrion matrix</location>
    </subcellularLocation>
</comment>
<comment type="similarity">
    <text evidence="4">Belongs to the peptidase M3 family.</text>
</comment>
<organism>
    <name type="scientific">Phaeosphaeria nodorum (strain SN15 / ATCC MYA-4574 / FGSC 10173)</name>
    <name type="common">Glume blotch fungus</name>
    <name type="synonym">Parastagonospora nodorum</name>
    <dbReference type="NCBI Taxonomy" id="321614"/>
    <lineage>
        <taxon>Eukaryota</taxon>
        <taxon>Fungi</taxon>
        <taxon>Dikarya</taxon>
        <taxon>Ascomycota</taxon>
        <taxon>Pezizomycotina</taxon>
        <taxon>Dothideomycetes</taxon>
        <taxon>Pleosporomycetidae</taxon>
        <taxon>Pleosporales</taxon>
        <taxon>Pleosporineae</taxon>
        <taxon>Phaeosphaeriaceae</taxon>
        <taxon>Parastagonospora</taxon>
    </lineage>
</organism>
<accession>Q0TXL7</accession>
<protein>
    <recommendedName>
        <fullName>Mitochondrial intermediate peptidase</fullName>
        <shortName>MIP</shortName>
        <ecNumber>3.4.24.59</ecNumber>
    </recommendedName>
    <alternativeName>
        <fullName>Octapeptidyl aminopeptidase</fullName>
    </alternativeName>
</protein>
<feature type="transit peptide" description="Mitochondrion" evidence="2">
    <location>
        <begin position="1"/>
        <end position="29"/>
    </location>
</feature>
<feature type="chain" id="PRO_0000338591" description="Mitochondrial intermediate peptidase">
    <location>
        <begin position="30"/>
        <end position="790"/>
    </location>
</feature>
<feature type="active site" evidence="3">
    <location>
        <position position="571"/>
    </location>
</feature>
<feature type="binding site" evidence="3">
    <location>
        <position position="570"/>
    </location>
    <ligand>
        <name>Zn(2+)</name>
        <dbReference type="ChEBI" id="CHEBI:29105"/>
        <note>catalytic</note>
    </ligand>
</feature>
<feature type="binding site" evidence="3">
    <location>
        <position position="574"/>
    </location>
    <ligand>
        <name>Zn(2+)</name>
        <dbReference type="ChEBI" id="CHEBI:29105"/>
        <note>catalytic</note>
    </ligand>
</feature>
<feature type="binding site" evidence="3">
    <location>
        <position position="577"/>
    </location>
    <ligand>
        <name>Zn(2+)</name>
        <dbReference type="ChEBI" id="CHEBI:29105"/>
        <note>catalytic</note>
    </ligand>
</feature>
<reference key="1">
    <citation type="journal article" date="2007" name="Plant Cell">
        <title>Dothideomycete-plant interactions illuminated by genome sequencing and EST analysis of the wheat pathogen Stagonospora nodorum.</title>
        <authorList>
            <person name="Hane J.K."/>
            <person name="Lowe R.G.T."/>
            <person name="Solomon P.S."/>
            <person name="Tan K.-C."/>
            <person name="Schoch C.L."/>
            <person name="Spatafora J.W."/>
            <person name="Crous P.W."/>
            <person name="Kodira C.D."/>
            <person name="Birren B.W."/>
            <person name="Galagan J.E."/>
            <person name="Torriani S.F.F."/>
            <person name="McDonald B.A."/>
            <person name="Oliver R.P."/>
        </authorList>
    </citation>
    <scope>NUCLEOTIDE SEQUENCE [LARGE SCALE GENOMIC DNA]</scope>
    <source>
        <strain>SN15 / ATCC MYA-4574 / FGSC 10173</strain>
    </source>
</reference>
<proteinExistence type="inferred from homology"/>
<name>PMIP_PHANO</name>
<evidence type="ECO:0000250" key="1"/>
<evidence type="ECO:0000255" key="2"/>
<evidence type="ECO:0000255" key="3">
    <source>
        <dbReference type="PROSITE-ProRule" id="PRU10095"/>
    </source>
</evidence>
<evidence type="ECO:0000305" key="4"/>
<dbReference type="EC" id="3.4.24.59"/>
<dbReference type="EMBL" id="CH445364">
    <property type="protein sequence ID" value="EAT76866.2"/>
    <property type="molecule type" value="Genomic_DNA"/>
</dbReference>
<dbReference type="RefSeq" id="XP_001805910.1">
    <property type="nucleotide sequence ID" value="XM_001805858.1"/>
</dbReference>
<dbReference type="SMR" id="Q0TXL7"/>
<dbReference type="FunCoup" id="Q0TXL7">
    <property type="interactions" value="604"/>
</dbReference>
<dbReference type="STRING" id="321614.Q0TXL7"/>
<dbReference type="EnsemblFungi" id="SNOT_15771">
    <property type="protein sequence ID" value="SNOT_15771"/>
    <property type="gene ID" value="SNOG_15771"/>
</dbReference>
<dbReference type="GeneID" id="5982840"/>
<dbReference type="KEGG" id="pno:SNOG_15771"/>
<dbReference type="VEuPathDB" id="FungiDB:JI435_157710"/>
<dbReference type="eggNOG" id="KOG2090">
    <property type="taxonomic scope" value="Eukaryota"/>
</dbReference>
<dbReference type="HOGENOM" id="CLU_001805_0_0_1"/>
<dbReference type="InParanoid" id="Q0TXL7"/>
<dbReference type="OrthoDB" id="17530at2759"/>
<dbReference type="Proteomes" id="UP000001055">
    <property type="component" value="Unassembled WGS sequence"/>
</dbReference>
<dbReference type="GO" id="GO:0005759">
    <property type="term" value="C:mitochondrial matrix"/>
    <property type="evidence" value="ECO:0007669"/>
    <property type="project" value="UniProtKB-SubCell"/>
</dbReference>
<dbReference type="GO" id="GO:0005739">
    <property type="term" value="C:mitochondrion"/>
    <property type="evidence" value="ECO:0000318"/>
    <property type="project" value="GO_Central"/>
</dbReference>
<dbReference type="GO" id="GO:0046872">
    <property type="term" value="F:metal ion binding"/>
    <property type="evidence" value="ECO:0007669"/>
    <property type="project" value="UniProtKB-KW"/>
</dbReference>
<dbReference type="GO" id="GO:0004222">
    <property type="term" value="F:metalloendopeptidase activity"/>
    <property type="evidence" value="ECO:0000318"/>
    <property type="project" value="GO_Central"/>
</dbReference>
<dbReference type="GO" id="GO:0006518">
    <property type="term" value="P:peptide metabolic process"/>
    <property type="evidence" value="ECO:0000318"/>
    <property type="project" value="GO_Central"/>
</dbReference>
<dbReference type="GO" id="GO:0006627">
    <property type="term" value="P:protein processing involved in protein targeting to mitochondrion"/>
    <property type="evidence" value="ECO:0000318"/>
    <property type="project" value="GO_Central"/>
</dbReference>
<dbReference type="CDD" id="cd06457">
    <property type="entry name" value="M3A_MIP"/>
    <property type="match status" value="1"/>
</dbReference>
<dbReference type="Gene3D" id="3.40.390.10">
    <property type="entry name" value="Collagenase (Catalytic Domain)"/>
    <property type="match status" value="1"/>
</dbReference>
<dbReference type="Gene3D" id="1.10.1370.10">
    <property type="entry name" value="Neurolysin, domain 3"/>
    <property type="match status" value="1"/>
</dbReference>
<dbReference type="InterPro" id="IPR033851">
    <property type="entry name" value="M3A_MIP"/>
</dbReference>
<dbReference type="InterPro" id="IPR024079">
    <property type="entry name" value="MetalloPept_cat_dom_sf"/>
</dbReference>
<dbReference type="InterPro" id="IPR024077">
    <property type="entry name" value="Neurolysin/TOP_dom2"/>
</dbReference>
<dbReference type="InterPro" id="IPR045090">
    <property type="entry name" value="Pept_M3A_M3B"/>
</dbReference>
<dbReference type="InterPro" id="IPR001567">
    <property type="entry name" value="Pept_M3A_M3B_dom"/>
</dbReference>
<dbReference type="PANTHER" id="PTHR11804:SF79">
    <property type="entry name" value="MITOCHONDRIAL INTERMEDIATE PEPTIDASE"/>
    <property type="match status" value="1"/>
</dbReference>
<dbReference type="PANTHER" id="PTHR11804">
    <property type="entry name" value="PROTEASE M3 THIMET OLIGOPEPTIDASE-RELATED"/>
    <property type="match status" value="1"/>
</dbReference>
<dbReference type="Pfam" id="PF01432">
    <property type="entry name" value="Peptidase_M3"/>
    <property type="match status" value="1"/>
</dbReference>
<dbReference type="SUPFAM" id="SSF55486">
    <property type="entry name" value="Metalloproteases ('zincins'), catalytic domain"/>
    <property type="match status" value="1"/>
</dbReference>
<dbReference type="PROSITE" id="PS00142">
    <property type="entry name" value="ZINC_PROTEASE"/>
    <property type="match status" value="1"/>
</dbReference>